<feature type="chain" id="PRO_0000254184" description="Transmembrane protein 104 homolog">
    <location>
        <begin position="1"/>
        <end position="492"/>
    </location>
</feature>
<feature type="topological domain" description="Cytoplasmic" evidence="1">
    <location>
        <begin position="1"/>
        <end position="17"/>
    </location>
</feature>
<feature type="transmembrane region" description="Helical" evidence="1">
    <location>
        <begin position="18"/>
        <end position="38"/>
    </location>
</feature>
<feature type="topological domain" description="Extracellular" evidence="1">
    <location>
        <begin position="39"/>
        <end position="44"/>
    </location>
</feature>
<feature type="transmembrane region" description="Helical" evidence="1">
    <location>
        <begin position="45"/>
        <end position="65"/>
    </location>
</feature>
<feature type="topological domain" description="Cytoplasmic" evidence="1">
    <location>
        <begin position="66"/>
        <end position="113"/>
    </location>
</feature>
<feature type="transmembrane region" description="Helical" evidence="1">
    <location>
        <begin position="114"/>
        <end position="134"/>
    </location>
</feature>
<feature type="topological domain" description="Extracellular" evidence="1">
    <location>
        <begin position="135"/>
        <end position="176"/>
    </location>
</feature>
<feature type="transmembrane region" description="Helical" evidence="1">
    <location>
        <begin position="177"/>
        <end position="197"/>
    </location>
</feature>
<feature type="topological domain" description="Cytoplasmic" evidence="1">
    <location>
        <begin position="198"/>
        <end position="209"/>
    </location>
</feature>
<feature type="transmembrane region" description="Helical" evidence="1">
    <location>
        <begin position="210"/>
        <end position="230"/>
    </location>
</feature>
<feature type="topological domain" description="Extracellular" evidence="1">
    <location>
        <begin position="231"/>
        <end position="237"/>
    </location>
</feature>
<feature type="transmembrane region" description="Helical" evidence="1">
    <location>
        <begin position="238"/>
        <end position="258"/>
    </location>
</feature>
<feature type="topological domain" description="Cytoplasmic" evidence="1">
    <location>
        <begin position="259"/>
        <end position="274"/>
    </location>
</feature>
<feature type="transmembrane region" description="Helical" evidence="1">
    <location>
        <begin position="275"/>
        <end position="295"/>
    </location>
</feature>
<feature type="topological domain" description="Extracellular" evidence="1">
    <location>
        <begin position="296"/>
        <end position="324"/>
    </location>
</feature>
<feature type="transmembrane region" description="Helical" evidence="1">
    <location>
        <begin position="325"/>
        <end position="345"/>
    </location>
</feature>
<feature type="topological domain" description="Cytoplasmic" evidence="1">
    <location>
        <begin position="346"/>
        <end position="392"/>
    </location>
</feature>
<feature type="transmembrane region" description="Helical" evidence="1">
    <location>
        <begin position="393"/>
        <end position="413"/>
    </location>
</feature>
<feature type="topological domain" description="Extracellular" evidence="1">
    <location>
        <begin position="414"/>
        <end position="415"/>
    </location>
</feature>
<feature type="transmembrane region" description="Helical" evidence="1">
    <location>
        <begin position="416"/>
        <end position="436"/>
    </location>
</feature>
<feature type="topological domain" description="Cytoplasmic" evidence="1">
    <location>
        <begin position="437"/>
        <end position="466"/>
    </location>
</feature>
<feature type="transmembrane region" description="Helical" evidence="1">
    <location>
        <begin position="467"/>
        <end position="487"/>
    </location>
</feature>
<feature type="topological domain" description="Extracellular" evidence="1">
    <location>
        <begin position="488"/>
        <end position="492"/>
    </location>
</feature>
<feature type="glycosylation site" description="N-linked (GlcNAc...) asparagine" evidence="2">
    <location>
        <position position="151"/>
    </location>
</feature>
<feature type="glycosylation site" description="N-linked (GlcNAc...) asparagine" evidence="1">
    <location>
        <position position="313"/>
    </location>
</feature>
<protein>
    <recommendedName>
        <fullName>Transmembrane protein 104 homolog</fullName>
    </recommendedName>
</protein>
<proteinExistence type="evidence at protein level"/>
<dbReference type="EMBL" id="Z73423">
    <property type="protein sequence ID" value="CAA97776.2"/>
    <property type="molecule type" value="Genomic_DNA"/>
</dbReference>
<dbReference type="PIR" id="T18871">
    <property type="entry name" value="T18871"/>
</dbReference>
<dbReference type="RefSeq" id="NP_509879.2">
    <property type="nucleotide sequence ID" value="NM_077478.5"/>
</dbReference>
<dbReference type="BioGRID" id="46225">
    <property type="interactions" value="2"/>
</dbReference>
<dbReference type="FunCoup" id="Q17598">
    <property type="interactions" value="2145"/>
</dbReference>
<dbReference type="IntAct" id="Q17598">
    <property type="interactions" value="2"/>
</dbReference>
<dbReference type="iPTMnet" id="Q17598"/>
<dbReference type="PaxDb" id="6239-C03A3.2"/>
<dbReference type="PeptideAtlas" id="Q17598"/>
<dbReference type="EnsemblMetazoa" id="C03A3.2.1">
    <property type="protein sequence ID" value="C03A3.2.1"/>
    <property type="gene ID" value="WBGene00007267"/>
</dbReference>
<dbReference type="GeneID" id="181315"/>
<dbReference type="KEGG" id="cel:CELE_C03A3.2"/>
<dbReference type="UCSC" id="C03A3.2.1">
    <property type="organism name" value="c. elegans"/>
</dbReference>
<dbReference type="AGR" id="WB:WBGene00007267"/>
<dbReference type="CTD" id="181315"/>
<dbReference type="WormBase" id="C03A3.2">
    <property type="protein sequence ID" value="CE31404"/>
    <property type="gene ID" value="WBGene00007267"/>
</dbReference>
<dbReference type="eggNOG" id="KOG3832">
    <property type="taxonomic scope" value="Eukaryota"/>
</dbReference>
<dbReference type="GeneTree" id="ENSGT00390000001244"/>
<dbReference type="HOGENOM" id="CLU_025541_1_0_1"/>
<dbReference type="InParanoid" id="Q17598"/>
<dbReference type="OMA" id="GHREGHP"/>
<dbReference type="OrthoDB" id="294541at2759"/>
<dbReference type="PhylomeDB" id="Q17598"/>
<dbReference type="PRO" id="PR:Q17598"/>
<dbReference type="Proteomes" id="UP000001940">
    <property type="component" value="Chromosome X"/>
</dbReference>
<dbReference type="Bgee" id="WBGene00007267">
    <property type="expression patterns" value="Expressed in larva and 4 other cell types or tissues"/>
</dbReference>
<dbReference type="GO" id="GO:0016020">
    <property type="term" value="C:membrane"/>
    <property type="evidence" value="ECO:0007669"/>
    <property type="project" value="UniProtKB-SubCell"/>
</dbReference>
<dbReference type="InterPro" id="IPR013057">
    <property type="entry name" value="AA_transpt_TM"/>
</dbReference>
<dbReference type="PANTHER" id="PTHR16189:SF0">
    <property type="entry name" value="TRANSMEMBRANE PROTEIN 104"/>
    <property type="match status" value="1"/>
</dbReference>
<dbReference type="PANTHER" id="PTHR16189">
    <property type="entry name" value="TRANSMEMBRANE PROTEIN 104-RELATED"/>
    <property type="match status" value="1"/>
</dbReference>
<dbReference type="Pfam" id="PF01490">
    <property type="entry name" value="Aa_trans"/>
    <property type="match status" value="1"/>
</dbReference>
<accession>Q17598</accession>
<sequence length="492" mass="54021">MQSNTDSSTSGTYSQTVGLLYVFNLIVGTGALALPKAFQTAGWLLSITLLTFSAFMSYVAATFVIEALSVANAVLSKKRRVEYDDVVVADGPSTFEISKKVEVSEMASMFLSKVSLVFSYFAIIIYLFGDLAIYSTTVPKSAMNIVCATINASTVKSSDPCHESWPEILTRMTVYRFFVIIFVVVVCLPMVIAGITKTRHIQIMTTLSRWAAFILMISLATMQLSSDGAAAHPPAYNFHGFGSLFGCAVYAFMCHHSIPSLITPMRTKDNVFGKIALVYGVVGVFYFTLSLTGAFAFEHVQDIYTLNFFHDGNTSFIYSIIDYFLALFPIITLTSSYPIIALTLINNFNVVKDILCPKVGQENESLLEADSLVEDNDTDDEREARNARNEKSVFDVLVPALVLALPTFLSLLTDDMLLLASITGSFPGVAVQFAIPCLLVTAARKHARSVLNFPVPRKNNSPFQSPIWIVLISSWAGFSMIMVLLNLVGVKF</sequence>
<gene>
    <name type="ORF">C03A3.2</name>
</gene>
<evidence type="ECO:0000255" key="1"/>
<evidence type="ECO:0000269" key="2">
    <source>
    </source>
</evidence>
<evidence type="ECO:0000305" key="3"/>
<keyword id="KW-0325">Glycoprotein</keyword>
<keyword id="KW-0472">Membrane</keyword>
<keyword id="KW-1185">Reference proteome</keyword>
<keyword id="KW-0812">Transmembrane</keyword>
<keyword id="KW-1133">Transmembrane helix</keyword>
<reference key="1">
    <citation type="journal article" date="1998" name="Science">
        <title>Genome sequence of the nematode C. elegans: a platform for investigating biology.</title>
        <authorList>
            <consortium name="The C. elegans sequencing consortium"/>
        </authorList>
    </citation>
    <scope>NUCLEOTIDE SEQUENCE [LARGE SCALE GENOMIC DNA]</scope>
    <source>
        <strain>Bristol N2</strain>
    </source>
</reference>
<reference key="2">
    <citation type="journal article" date="2007" name="Mol. Cell. Proteomics">
        <title>Proteomics reveals N-linked glycoprotein diversity in Caenorhabditis elegans and suggests an atypical translocation mechanism for integral membrane proteins.</title>
        <authorList>
            <person name="Kaji H."/>
            <person name="Kamiie J."/>
            <person name="Kawakami H."/>
            <person name="Kido K."/>
            <person name="Yamauchi Y."/>
            <person name="Shinkawa T."/>
            <person name="Taoka M."/>
            <person name="Takahashi N."/>
            <person name="Isobe T."/>
        </authorList>
    </citation>
    <scope>GLYCOSYLATION [LARGE SCALE ANALYSIS] AT ASN-151</scope>
    <scope>IDENTIFICATION BY MASS SPECTROMETRY</scope>
    <source>
        <strain>Bristol N2</strain>
    </source>
</reference>
<comment type="subcellular location">
    <subcellularLocation>
        <location evidence="3">Membrane</location>
        <topology evidence="3">Multi-pass membrane protein</topology>
    </subcellularLocation>
</comment>
<comment type="similarity">
    <text evidence="3">Belongs to the TMEM104 family.</text>
</comment>
<organism>
    <name type="scientific">Caenorhabditis elegans</name>
    <dbReference type="NCBI Taxonomy" id="6239"/>
    <lineage>
        <taxon>Eukaryota</taxon>
        <taxon>Metazoa</taxon>
        <taxon>Ecdysozoa</taxon>
        <taxon>Nematoda</taxon>
        <taxon>Chromadorea</taxon>
        <taxon>Rhabditida</taxon>
        <taxon>Rhabditina</taxon>
        <taxon>Rhabditomorpha</taxon>
        <taxon>Rhabditoidea</taxon>
        <taxon>Rhabditidae</taxon>
        <taxon>Peloderinae</taxon>
        <taxon>Caenorhabditis</taxon>
    </lineage>
</organism>
<name>TM104_CAEEL</name>